<dbReference type="EC" id="1.8.1.9" evidence="3"/>
<dbReference type="EMBL" id="X95798">
    <property type="protein sequence ID" value="CAA65070.1"/>
    <property type="molecule type" value="Genomic_DNA"/>
</dbReference>
<dbReference type="EMBL" id="AL123456">
    <property type="protein sequence ID" value="CCP46742.1"/>
    <property type="molecule type" value="Genomic_DNA"/>
</dbReference>
<dbReference type="PIR" id="A70851">
    <property type="entry name" value="A70851"/>
</dbReference>
<dbReference type="RefSeq" id="NP_218430.1">
    <property type="nucleotide sequence ID" value="NC_000962.3"/>
</dbReference>
<dbReference type="RefSeq" id="WP_003900782.1">
    <property type="nucleotide sequence ID" value="NZ_NVQJ01000005.1"/>
</dbReference>
<dbReference type="PDB" id="2A87">
    <property type="method" value="X-ray"/>
    <property type="resolution" value="3.00 A"/>
    <property type="chains" value="A/B=1-335"/>
</dbReference>
<dbReference type="PDBsum" id="2A87"/>
<dbReference type="SMR" id="P9WHH1"/>
<dbReference type="FunCoup" id="P9WHH1">
    <property type="interactions" value="346"/>
</dbReference>
<dbReference type="STRING" id="83332.Rv3913"/>
<dbReference type="BindingDB" id="P9WHH1"/>
<dbReference type="ChEMBL" id="CHEMBL2390811"/>
<dbReference type="iPTMnet" id="P9WHH1"/>
<dbReference type="PaxDb" id="83332-Rv3913"/>
<dbReference type="DNASU" id="886232"/>
<dbReference type="GeneID" id="45427913"/>
<dbReference type="GeneID" id="886232"/>
<dbReference type="KEGG" id="mtu:Rv3913"/>
<dbReference type="KEGG" id="mtv:RVBD_3913"/>
<dbReference type="TubercuList" id="Rv3913"/>
<dbReference type="eggNOG" id="COG0492">
    <property type="taxonomic scope" value="Bacteria"/>
</dbReference>
<dbReference type="InParanoid" id="P9WHH1"/>
<dbReference type="OrthoDB" id="9806179at2"/>
<dbReference type="PhylomeDB" id="P9WHH1"/>
<dbReference type="Reactome" id="R-HSA-1222541">
    <property type="pathway name" value="Cell redox homeostasis"/>
</dbReference>
<dbReference type="EvolutionaryTrace" id="P9WHH1"/>
<dbReference type="PRO" id="PR:P9WHH1"/>
<dbReference type="Proteomes" id="UP000001584">
    <property type="component" value="Chromosome"/>
</dbReference>
<dbReference type="GO" id="GO:0005829">
    <property type="term" value="C:cytosol"/>
    <property type="evidence" value="ECO:0000304"/>
    <property type="project" value="Reactome"/>
</dbReference>
<dbReference type="GO" id="GO:0050660">
    <property type="term" value="F:flavin adenine dinucleotide binding"/>
    <property type="evidence" value="ECO:0000314"/>
    <property type="project" value="MTBBASE"/>
</dbReference>
<dbReference type="GO" id="GO:0070402">
    <property type="term" value="F:NADPH binding"/>
    <property type="evidence" value="ECO:0000314"/>
    <property type="project" value="MTBBASE"/>
</dbReference>
<dbReference type="GO" id="GO:0015035">
    <property type="term" value="F:protein-disulfide reductase activity"/>
    <property type="evidence" value="ECO:0000314"/>
    <property type="project" value="MTBBASE"/>
</dbReference>
<dbReference type="GO" id="GO:0004791">
    <property type="term" value="F:thioredoxin-disulfide reductase (NADPH) activity"/>
    <property type="evidence" value="ECO:0000314"/>
    <property type="project" value="MTBBASE"/>
</dbReference>
<dbReference type="GO" id="GO:0045454">
    <property type="term" value="P:cell redox homeostasis"/>
    <property type="evidence" value="ECO:0000314"/>
    <property type="project" value="MTBBASE"/>
</dbReference>
<dbReference type="GO" id="GO:0019430">
    <property type="term" value="P:removal of superoxide radicals"/>
    <property type="evidence" value="ECO:0007669"/>
    <property type="project" value="InterPro"/>
</dbReference>
<dbReference type="GO" id="GO:0001666">
    <property type="term" value="P:response to hypoxia"/>
    <property type="evidence" value="ECO:0000270"/>
    <property type="project" value="MTBBASE"/>
</dbReference>
<dbReference type="Gene3D" id="3.50.50.60">
    <property type="entry name" value="FAD/NAD(P)-binding domain"/>
    <property type="match status" value="2"/>
</dbReference>
<dbReference type="InterPro" id="IPR036188">
    <property type="entry name" value="FAD/NAD-bd_sf"/>
</dbReference>
<dbReference type="InterPro" id="IPR023753">
    <property type="entry name" value="FAD/NAD-binding_dom"/>
</dbReference>
<dbReference type="InterPro" id="IPR050097">
    <property type="entry name" value="Ferredoxin-NADP_redctase_2"/>
</dbReference>
<dbReference type="InterPro" id="IPR008255">
    <property type="entry name" value="Pyr_nucl-diS_OxRdtase_2_AS"/>
</dbReference>
<dbReference type="InterPro" id="IPR005982">
    <property type="entry name" value="Thioredox_Rdtase"/>
</dbReference>
<dbReference type="NCBIfam" id="TIGR01292">
    <property type="entry name" value="TRX_reduct"/>
    <property type="match status" value="1"/>
</dbReference>
<dbReference type="PANTHER" id="PTHR48105">
    <property type="entry name" value="THIOREDOXIN REDUCTASE 1-RELATED-RELATED"/>
    <property type="match status" value="1"/>
</dbReference>
<dbReference type="Pfam" id="PF07992">
    <property type="entry name" value="Pyr_redox_2"/>
    <property type="match status" value="1"/>
</dbReference>
<dbReference type="PRINTS" id="PR00368">
    <property type="entry name" value="FADPNR"/>
</dbReference>
<dbReference type="PRINTS" id="PR00469">
    <property type="entry name" value="PNDRDTASEII"/>
</dbReference>
<dbReference type="SUPFAM" id="SSF51905">
    <property type="entry name" value="FAD/NAD(P)-binding domain"/>
    <property type="match status" value="1"/>
</dbReference>
<dbReference type="PROSITE" id="PS00573">
    <property type="entry name" value="PYRIDINE_REDOX_2"/>
    <property type="match status" value="1"/>
</dbReference>
<accession>P9WHH1</accession>
<accession>L0TFM3</accession>
<accession>O53592</accession>
<accession>P52214</accession>
<organism>
    <name type="scientific">Mycobacterium tuberculosis (strain ATCC 25618 / H37Rv)</name>
    <dbReference type="NCBI Taxonomy" id="83332"/>
    <lineage>
        <taxon>Bacteria</taxon>
        <taxon>Bacillati</taxon>
        <taxon>Actinomycetota</taxon>
        <taxon>Actinomycetes</taxon>
        <taxon>Mycobacteriales</taxon>
        <taxon>Mycobacteriaceae</taxon>
        <taxon>Mycobacterium</taxon>
        <taxon>Mycobacterium tuberculosis complex</taxon>
    </lineage>
</organism>
<proteinExistence type="evidence at protein level"/>
<name>TRXB_MYCTU</name>
<reference key="1">
    <citation type="submission" date="1996-03" db="EMBL/GenBank/DDBJ databases">
        <title>Sequence analysis and functional characterization of thioredoxin and thioredoxin reductase of Mycobacterium tuberculosis.</title>
        <authorList>
            <person name="Wieles B."/>
            <person name="Phillip W."/>
            <person name="Drijfhout J.W."/>
            <person name="Offringa R."/>
            <person name="Ottenhoff T.H.M."/>
        </authorList>
    </citation>
    <scope>NUCLEOTIDE SEQUENCE [GENOMIC DNA]</scope>
</reference>
<reference key="2">
    <citation type="journal article" date="1998" name="Nature">
        <title>Deciphering the biology of Mycobacterium tuberculosis from the complete genome sequence.</title>
        <authorList>
            <person name="Cole S.T."/>
            <person name="Brosch R."/>
            <person name="Parkhill J."/>
            <person name="Garnier T."/>
            <person name="Churcher C.M."/>
            <person name="Harris D.E."/>
            <person name="Gordon S.V."/>
            <person name="Eiglmeier K."/>
            <person name="Gas S."/>
            <person name="Barry C.E. III"/>
            <person name="Tekaia F."/>
            <person name="Badcock K."/>
            <person name="Basham D."/>
            <person name="Brown D."/>
            <person name="Chillingworth T."/>
            <person name="Connor R."/>
            <person name="Davies R.M."/>
            <person name="Devlin K."/>
            <person name="Feltwell T."/>
            <person name="Gentles S."/>
            <person name="Hamlin N."/>
            <person name="Holroyd S."/>
            <person name="Hornsby T."/>
            <person name="Jagels K."/>
            <person name="Krogh A."/>
            <person name="McLean J."/>
            <person name="Moule S."/>
            <person name="Murphy L.D."/>
            <person name="Oliver S."/>
            <person name="Osborne J."/>
            <person name="Quail M.A."/>
            <person name="Rajandream M.A."/>
            <person name="Rogers J."/>
            <person name="Rutter S."/>
            <person name="Seeger K."/>
            <person name="Skelton S."/>
            <person name="Squares S."/>
            <person name="Squares R."/>
            <person name="Sulston J.E."/>
            <person name="Taylor K."/>
            <person name="Whitehead S."/>
            <person name="Barrell B.G."/>
        </authorList>
    </citation>
    <scope>NUCLEOTIDE SEQUENCE [LARGE SCALE GENOMIC DNA]</scope>
    <source>
        <strain>ATCC 25618 / H37Rv</strain>
    </source>
</reference>
<reference key="3">
    <citation type="journal article" date="2001" name="J. Bacteriol.">
        <title>The alternative sigma factor SigH regulates major components of oxidative and heat stress responses in Mycobacterium tuberculosis.</title>
        <authorList>
            <person name="Raman S."/>
            <person name="Song T."/>
            <person name="Puyang X."/>
            <person name="Bardarov S."/>
            <person name="Jacobs W.R. Jr."/>
            <person name="Husson R.N."/>
        </authorList>
    </citation>
    <scope>INDUCTION BY SIGH</scope>
    <source>
        <strain>ATCC 25618 / H37Rv</strain>
    </source>
</reference>
<reference key="4">
    <citation type="journal article" date="2008" name="BMC Syst. Biol.">
        <title>targetTB: a target identification pipeline for Mycobacterium tuberculosis through an interactome, reactome and genome-scale structural analysis.</title>
        <authorList>
            <person name="Raman K."/>
            <person name="Yeturu K."/>
            <person name="Chandra N."/>
        </authorList>
    </citation>
    <scope>IDENTIFICATION AS A DRUG TARGET [LARGE SCALE ANALYSIS]</scope>
</reference>
<reference key="5">
    <citation type="journal article" date="2011" name="Mol. Cell. Proteomics">
        <title>Proteogenomic analysis of Mycobacterium tuberculosis by high resolution mass spectrometry.</title>
        <authorList>
            <person name="Kelkar D.S."/>
            <person name="Kumar D."/>
            <person name="Kumar P."/>
            <person name="Balakrishnan L."/>
            <person name="Muthusamy B."/>
            <person name="Yadav A.K."/>
            <person name="Shrivastava P."/>
            <person name="Marimuthu A."/>
            <person name="Anand S."/>
            <person name="Sundaram H."/>
            <person name="Kingsbury R."/>
            <person name="Harsha H.C."/>
            <person name="Nair B."/>
            <person name="Prasad T.S."/>
            <person name="Chauhan D.S."/>
            <person name="Katoch K."/>
            <person name="Katoch V.M."/>
            <person name="Kumar P."/>
            <person name="Chaerkady R."/>
            <person name="Ramachandran S."/>
            <person name="Dash D."/>
            <person name="Pandey A."/>
        </authorList>
    </citation>
    <scope>ACETYLATION [LARGE SCALE ANALYSIS] AT THR-2</scope>
    <scope>CLEAVAGE OF INITIATOR METHIONINE [LARGE SCALE ANALYSIS]</scope>
    <scope>IDENTIFICATION BY MASS SPECTROMETRY [LARGE SCALE ANALYSIS]</scope>
    <source>
        <strain>ATCC 25618 / H37Rv</strain>
    </source>
</reference>
<reference key="6">
    <citation type="journal article" date="2016" name="PLoS Pathog.">
        <title>Mycobacterium tuberculosis thioredoxin reductase is essential for thiol redox homeostasis but plays a minor role in antioxidant defense.</title>
        <authorList>
            <person name="Lin K."/>
            <person name="O'Brien K.M."/>
            <person name="Trujillo C."/>
            <person name="Wang R."/>
            <person name="Wallach J.B."/>
            <person name="Schnappinger D."/>
            <person name="Ehrt S."/>
        </authorList>
    </citation>
    <scope>FUNCTION</scope>
    <scope>DISRUPTION PHENOTYPE</scope>
</reference>
<reference key="7">
    <citation type="journal article" date="2018" name="Sci. Rep.">
        <title>Protein tyrosine kinase, PtkA, is required for Mycobacterium tuberculosis growth in macrophages.</title>
        <authorList>
            <person name="Wong D."/>
            <person name="Li W."/>
            <person name="Chao J.D."/>
            <person name="Zhou P."/>
            <person name="Narula G."/>
            <person name="Tsui C."/>
            <person name="Ko M."/>
            <person name="Xie J."/>
            <person name="Martinez-Frailes C."/>
            <person name="Av-Gay Y."/>
        </authorList>
    </citation>
    <scope>PHOSPHORYLATION AT TYR-32</scope>
    <scope>MUTAGENESIS OF TYR-32</scope>
</reference>
<reference evidence="12" key="8">
    <citation type="journal article" date="2005" name="Acta Crystallogr. D">
        <title>Conformational flexibility of Mycobacterium tuberculosis thioredoxin reductase: crystal structure and normal-mode analysis.</title>
        <authorList>
            <person name="Akif M."/>
            <person name="Suhre K."/>
            <person name="Verma C."/>
            <person name="Mande S.C."/>
        </authorList>
    </citation>
    <scope>X-RAY CRYSTALLOGRAPHY (3.00 ANGSTROMS) IN COMPLEX WITH FAD AND NADP</scope>
    <scope>CATALYTIC ACTIVITY</scope>
    <scope>COFACTOR</scope>
    <scope>SUBUNIT</scope>
    <scope>DISULFIDE BOND</scope>
</reference>
<protein>
    <recommendedName>
        <fullName evidence="10">Thioredoxin reductase</fullName>
        <shortName>TR</shortName>
        <shortName>TRXR</shortName>
        <ecNumber evidence="3">1.8.1.9</ecNumber>
    </recommendedName>
</protein>
<feature type="initiator methionine" description="Removed" evidence="13">
    <location>
        <position position="1"/>
    </location>
</feature>
<feature type="chain" id="PRO_0000166741" description="Thioredoxin reductase">
    <location>
        <begin position="2"/>
        <end position="335"/>
    </location>
</feature>
<feature type="binding site" evidence="3 12">
    <location>
        <begin position="22"/>
        <end position="25"/>
    </location>
    <ligand>
        <name>FAD</name>
        <dbReference type="ChEBI" id="CHEBI:57692"/>
    </ligand>
</feature>
<feature type="binding site" evidence="3 12">
    <location>
        <begin position="44"/>
        <end position="51"/>
    </location>
    <ligand>
        <name>FAD</name>
        <dbReference type="ChEBI" id="CHEBI:57692"/>
    </ligand>
</feature>
<feature type="binding site" evidence="3 12">
    <location>
        <position position="60"/>
    </location>
    <ligand>
        <name>FAD</name>
        <dbReference type="ChEBI" id="CHEBI:57692"/>
    </ligand>
</feature>
<feature type="binding site" evidence="3 12">
    <location>
        <position position="93"/>
    </location>
    <ligand>
        <name>FAD</name>
        <dbReference type="ChEBI" id="CHEBI:57692"/>
    </ligand>
</feature>
<feature type="binding site" evidence="3 12">
    <location>
        <position position="166"/>
    </location>
    <ligand>
        <name>NADP(+)</name>
        <dbReference type="ChEBI" id="CHEBI:58349"/>
    </ligand>
</feature>
<feature type="binding site" evidence="3 12">
    <location>
        <position position="185"/>
    </location>
    <ligand>
        <name>NADP(+)</name>
        <dbReference type="ChEBI" id="CHEBI:58349"/>
    </ligand>
</feature>
<feature type="binding site" evidence="3 12">
    <location>
        <position position="191"/>
    </location>
    <ligand>
        <name>NADP(+)</name>
        <dbReference type="ChEBI" id="CHEBI:58349"/>
    </ligand>
</feature>
<feature type="binding site" evidence="3 12">
    <location>
        <position position="248"/>
    </location>
    <ligand>
        <name>NADP(+)</name>
        <dbReference type="ChEBI" id="CHEBI:58349"/>
    </ligand>
</feature>
<feature type="binding site" evidence="3 12">
    <location>
        <position position="268"/>
    </location>
    <ligand>
        <name>NADP(+)</name>
        <dbReference type="ChEBI" id="CHEBI:58349"/>
    </ligand>
</feature>
<feature type="binding site" evidence="3 12">
    <location>
        <position position="288"/>
    </location>
    <ligand>
        <name>FAD</name>
        <dbReference type="ChEBI" id="CHEBI:57692"/>
    </ligand>
</feature>
<feature type="binding site" evidence="3 12">
    <location>
        <begin position="295"/>
        <end position="298"/>
    </location>
    <ligand>
        <name>FAD</name>
        <dbReference type="ChEBI" id="CHEBI:57692"/>
    </ligand>
</feature>
<feature type="binding site" evidence="3 12">
    <location>
        <position position="295"/>
    </location>
    <ligand>
        <name>NADP(+)</name>
        <dbReference type="ChEBI" id="CHEBI:58349"/>
    </ligand>
</feature>
<feature type="modified residue" description="N-acetylthreonine" evidence="13">
    <location>
        <position position="2"/>
    </location>
</feature>
<feature type="modified residue" description="Phosphotyrosine; by PtkA" evidence="6">
    <location>
        <position position="32"/>
    </location>
</feature>
<feature type="disulfide bond" description="Redox-active" evidence="3">
    <location>
        <begin position="145"/>
        <end position="148"/>
    </location>
</feature>
<feature type="mutagenesis site" description="Significantly reduces phosphorylation." evidence="6">
    <original>Y</original>
    <variation>A</variation>
    <location>
        <position position="32"/>
    </location>
</feature>
<feature type="sequence conflict" description="In Ref. 1; CAA65070." evidence="11" ref="1">
    <original>A</original>
    <variation>R</variation>
    <location>
        <position position="125"/>
    </location>
</feature>
<feature type="sequence conflict" description="In Ref. 1; CAA65070." evidence="11" ref="1">
    <original>V</original>
    <variation>C</variation>
    <location>
        <position position="215"/>
    </location>
</feature>
<feature type="sequence conflict" description="In Ref. 1; CAA65070." evidence="11" ref="1">
    <original>V</original>
    <variation>Y</variation>
    <location>
        <position position="228"/>
    </location>
</feature>
<feature type="strand" evidence="14">
    <location>
        <begin position="15"/>
        <end position="20"/>
    </location>
</feature>
<feature type="helix" evidence="14">
    <location>
        <begin position="23"/>
        <end position="35"/>
    </location>
</feature>
<feature type="strand" evidence="14">
    <location>
        <begin position="41"/>
        <end position="43"/>
    </location>
</feature>
<feature type="helix" evidence="14">
    <location>
        <begin position="51"/>
        <end position="53"/>
    </location>
</feature>
<feature type="helix" evidence="14">
    <location>
        <begin position="70"/>
        <end position="83"/>
    </location>
</feature>
<feature type="strand" evidence="14">
    <location>
        <begin position="87"/>
        <end position="89"/>
    </location>
</feature>
<feature type="strand" evidence="14">
    <location>
        <begin position="93"/>
        <end position="97"/>
    </location>
</feature>
<feature type="strand" evidence="14">
    <location>
        <begin position="99"/>
        <end position="107"/>
    </location>
</feature>
<feature type="strand" evidence="14">
    <location>
        <begin position="112"/>
        <end position="120"/>
    </location>
</feature>
<feature type="strand" evidence="14">
    <location>
        <begin position="124"/>
        <end position="126"/>
    </location>
</feature>
<feature type="helix" evidence="14">
    <location>
        <begin position="133"/>
        <end position="136"/>
    </location>
</feature>
<feature type="turn" evidence="14">
    <location>
        <begin position="139"/>
        <end position="141"/>
    </location>
</feature>
<feature type="strand" evidence="14">
    <location>
        <begin position="142"/>
        <end position="144"/>
    </location>
</feature>
<feature type="helix" evidence="14">
    <location>
        <begin position="146"/>
        <end position="149"/>
    </location>
</feature>
<feature type="helix" evidence="14">
    <location>
        <begin position="150"/>
        <end position="153"/>
    </location>
</feature>
<feature type="strand" evidence="14">
    <location>
        <begin position="157"/>
        <end position="161"/>
    </location>
</feature>
<feature type="helix" evidence="14">
    <location>
        <begin position="165"/>
        <end position="174"/>
    </location>
</feature>
<feature type="turn" evidence="14">
    <location>
        <begin position="175"/>
        <end position="177"/>
    </location>
</feature>
<feature type="strand" evidence="14">
    <location>
        <begin position="179"/>
        <end position="184"/>
    </location>
</feature>
<feature type="strand" evidence="14">
    <location>
        <begin position="186"/>
        <end position="189"/>
    </location>
</feature>
<feature type="helix" evidence="14">
    <location>
        <begin position="196"/>
        <end position="202"/>
    </location>
</feature>
<feature type="strand" evidence="14">
    <location>
        <begin position="206"/>
        <end position="209"/>
    </location>
</feature>
<feature type="strand" evidence="14">
    <location>
        <begin position="211"/>
        <end position="218"/>
    </location>
</feature>
<feature type="strand" evidence="14">
    <location>
        <begin position="220"/>
        <end position="222"/>
    </location>
</feature>
<feature type="strand" evidence="14">
    <location>
        <begin position="225"/>
        <end position="231"/>
    </location>
</feature>
<feature type="strand" evidence="14">
    <location>
        <begin position="237"/>
        <end position="239"/>
    </location>
</feature>
<feature type="strand" evidence="14">
    <location>
        <begin position="244"/>
        <end position="246"/>
    </location>
</feature>
<feature type="strand" evidence="14">
    <location>
        <begin position="250"/>
        <end position="252"/>
    </location>
</feature>
<feature type="turn" evidence="14">
    <location>
        <begin position="255"/>
        <end position="257"/>
    </location>
</feature>
<feature type="strand" evidence="14">
    <location>
        <begin position="275"/>
        <end position="277"/>
    </location>
</feature>
<feature type="strand" evidence="14">
    <location>
        <begin position="283"/>
        <end position="285"/>
    </location>
</feature>
<feature type="helix" evidence="14">
    <location>
        <begin position="287"/>
        <end position="289"/>
    </location>
</feature>
<feature type="helix" evidence="14">
    <location>
        <begin position="297"/>
        <end position="320"/>
    </location>
</feature>
<comment type="function">
    <text evidence="5">Essential thiol-reducing enzyme that protects the cell from thiol-specific oxidizing stress. Plays a minor role in defense against oxidative and nitrosative stress. Is essential to establish and maintain infection in mice.</text>
</comment>
<comment type="catalytic activity">
    <reaction evidence="3">
        <text>[thioredoxin]-dithiol + NADP(+) = [thioredoxin]-disulfide + NADPH + H(+)</text>
        <dbReference type="Rhea" id="RHEA:20345"/>
        <dbReference type="Rhea" id="RHEA-COMP:10698"/>
        <dbReference type="Rhea" id="RHEA-COMP:10700"/>
        <dbReference type="ChEBI" id="CHEBI:15378"/>
        <dbReference type="ChEBI" id="CHEBI:29950"/>
        <dbReference type="ChEBI" id="CHEBI:50058"/>
        <dbReference type="ChEBI" id="CHEBI:57783"/>
        <dbReference type="ChEBI" id="CHEBI:58349"/>
        <dbReference type="EC" id="1.8.1.9"/>
    </reaction>
</comment>
<comment type="cofactor">
    <cofactor evidence="3">
        <name>FAD</name>
        <dbReference type="ChEBI" id="CHEBI:57692"/>
    </cofactor>
    <text evidence="3">Binds 1 FAD per subunit.</text>
</comment>
<comment type="subunit">
    <text evidence="3">Homodimer.</text>
</comment>
<comment type="subcellular location">
    <subcellularLocation>
        <location evidence="1">Cytoplasm</location>
    </subcellularLocation>
</comment>
<comment type="induction">
    <text evidence="2">Expressed following oxidative stress under control of SigH.</text>
</comment>
<comment type="PTM">
    <text evidence="6">Phosphorylated on Tyr-32 by PtkA.</text>
</comment>
<comment type="disruption phenotype">
    <text evidence="5">Essential, a deletion mutant cannot be isolated. TrxB depletion inhibits mycobacterial growth and causes lytic death of the cells. Depletion affects growth-essential processes, including sulfur and DNA metabolism. Partially depleted cells are highly susceptible to thiol-specific oxidizing stress, but not to peroxide and reactive nitrogen species. Depleted cells are highly susceptible to the cell wall biosynthesis inhibitors vancomycin and moenomycin. In vivo, depletion of TrxB results in clearance of M.tuberculosis during both the acute and chronic phases of infection.</text>
</comment>
<comment type="miscellaneous">
    <text evidence="3">The active site is a redox-active disulfide bond.</text>
</comment>
<comment type="miscellaneous">
    <text evidence="4">Was identified as a high-confidence drug target.</text>
</comment>
<comment type="similarity">
    <text evidence="11">Belongs to the class-II pyridine nucleotide-disulfide oxidoreductase family.</text>
</comment>
<keyword id="KW-0002">3D-structure</keyword>
<keyword id="KW-0007">Acetylation</keyword>
<keyword id="KW-0963">Cytoplasm</keyword>
<keyword id="KW-1015">Disulfide bond</keyword>
<keyword id="KW-0274">FAD</keyword>
<keyword id="KW-0285">Flavoprotein</keyword>
<keyword id="KW-0521">NADP</keyword>
<keyword id="KW-0560">Oxidoreductase</keyword>
<keyword id="KW-0597">Phosphoprotein</keyword>
<keyword id="KW-0676">Redox-active center</keyword>
<keyword id="KW-1185">Reference proteome</keyword>
<evidence type="ECO:0000250" key="1"/>
<evidence type="ECO:0000269" key="2">
    <source>
    </source>
</evidence>
<evidence type="ECO:0000269" key="3">
    <source>
    </source>
</evidence>
<evidence type="ECO:0000269" key="4">
    <source>
    </source>
</evidence>
<evidence type="ECO:0000269" key="5">
    <source>
    </source>
</evidence>
<evidence type="ECO:0000269" key="6">
    <source>
    </source>
</evidence>
<evidence type="ECO:0000303" key="7">
    <source>
    </source>
</evidence>
<evidence type="ECO:0000303" key="8">
    <source>
    </source>
</evidence>
<evidence type="ECO:0000303" key="9">
    <source>
    </source>
</evidence>
<evidence type="ECO:0000303" key="10">
    <source ref="1"/>
</evidence>
<evidence type="ECO:0000305" key="11"/>
<evidence type="ECO:0007744" key="12">
    <source>
        <dbReference type="PDB" id="2A87"/>
    </source>
</evidence>
<evidence type="ECO:0007744" key="13">
    <source>
    </source>
</evidence>
<evidence type="ECO:0007829" key="14">
    <source>
        <dbReference type="PDB" id="2A87"/>
    </source>
</evidence>
<gene>
    <name type="primary">trxB</name>
    <name evidence="7 9" type="synonym">trxB2</name>
    <name evidence="8" type="synonym">trxR</name>
    <name type="ordered locus">Rv3913</name>
    <name type="ORF">MTV028.04</name>
</gene>
<sequence length="335" mass="35643">MTAPPVHDRAHHPVRDVIVIGSGPAGYTAALYAARAQLAPLVFEGTSFGGALMTTTDVENYPGFRNGITGPELMDEMREQALRFGADLRMEDVESVSLHGPLKSVVTADGQTHRARAVILAMGAAARYLQVPGEQELLGRGVSSCATCDGFFFRDQDIAVIGGGDSAMEEATFLTRFARSVTLVHRRDEFRASKIMLDRARNNDKIRFLTNHTVVAVDGDTTVTGLRVRDTNTGAETTLPVTGVFVAIGHEPRSGLVREAIDVDPDGYVLVQGRTTSTSLPGVFAAGDLVDRTYRQAVTAAGSGCAAAIDAERWLAEHAATGEADSTDALIGAQR</sequence>